<name>HIP33_ARATH</name>
<organism evidence="10">
    <name type="scientific">Arabidopsis thaliana</name>
    <name type="common">Mouse-ear cress</name>
    <dbReference type="NCBI Taxonomy" id="3702"/>
    <lineage>
        <taxon>Eukaryota</taxon>
        <taxon>Viridiplantae</taxon>
        <taxon>Streptophyta</taxon>
        <taxon>Embryophyta</taxon>
        <taxon>Tracheophyta</taxon>
        <taxon>Spermatophyta</taxon>
        <taxon>Magnoliopsida</taxon>
        <taxon>eudicotyledons</taxon>
        <taxon>Gunneridae</taxon>
        <taxon>Pentapetalae</taxon>
        <taxon>rosids</taxon>
        <taxon>malvids</taxon>
        <taxon>Brassicales</taxon>
        <taxon>Brassicaceae</taxon>
        <taxon>Camelineae</taxon>
        <taxon>Arabidopsis</taxon>
    </lineage>
</organism>
<evidence type="ECO:0000250" key="1">
    <source>
        <dbReference type="UniProtKB" id="Q9LZF1"/>
    </source>
</evidence>
<evidence type="ECO:0000250" key="2">
    <source>
        <dbReference type="UniProtKB" id="Q9SZN7"/>
    </source>
</evidence>
<evidence type="ECO:0000255" key="3">
    <source>
        <dbReference type="PROSITE-ProRule" id="PRU00280"/>
    </source>
</evidence>
<evidence type="ECO:0000256" key="4">
    <source>
        <dbReference type="SAM" id="MobiDB-lite"/>
    </source>
</evidence>
<evidence type="ECO:0000303" key="5">
    <source>
    </source>
</evidence>
<evidence type="ECO:0000303" key="6">
    <source>
    </source>
</evidence>
<evidence type="ECO:0000305" key="7"/>
<evidence type="ECO:0000312" key="8">
    <source>
        <dbReference type="Araport" id="AT5G19090"/>
    </source>
</evidence>
<evidence type="ECO:0000312" key="9">
    <source>
        <dbReference type="EMBL" id="AC068809"/>
    </source>
</evidence>
<evidence type="ECO:0000312" key="10">
    <source>
        <dbReference type="Proteomes" id="UP000006548"/>
    </source>
</evidence>
<accession>F4JZL7</accession>
<accession>F4JZL8</accession>
<accession>Q84WQ1</accession>
<feature type="chain" id="PRO_0000437843" description="Heavy metal-associated isoprenylated plant protein 33">
    <location>
        <begin position="1"/>
        <end position="584"/>
    </location>
</feature>
<feature type="propeptide" id="PRO_0000437844" description="Removed in mature form" evidence="7">
    <location>
        <begin position="585"/>
        <end position="587"/>
    </location>
</feature>
<feature type="domain" description="HMA" evidence="3">
    <location>
        <begin position="9"/>
        <end position="72"/>
    </location>
</feature>
<feature type="region of interest" description="Disordered" evidence="4">
    <location>
        <begin position="98"/>
        <end position="146"/>
    </location>
</feature>
<feature type="region of interest" description="Disordered" evidence="4">
    <location>
        <begin position="176"/>
        <end position="261"/>
    </location>
</feature>
<feature type="region of interest" description="Disordered" evidence="4">
    <location>
        <begin position="287"/>
        <end position="449"/>
    </location>
</feature>
<feature type="region of interest" description="Disordered" evidence="4">
    <location>
        <begin position="462"/>
        <end position="504"/>
    </location>
</feature>
<feature type="region of interest" description="Disordered" evidence="4">
    <location>
        <begin position="532"/>
        <end position="587"/>
    </location>
</feature>
<feature type="compositionally biased region" description="Gly residues" evidence="4">
    <location>
        <begin position="104"/>
        <end position="113"/>
    </location>
</feature>
<feature type="compositionally biased region" description="Gly residues" evidence="4">
    <location>
        <begin position="121"/>
        <end position="140"/>
    </location>
</feature>
<feature type="compositionally biased region" description="Low complexity" evidence="4">
    <location>
        <begin position="194"/>
        <end position="208"/>
    </location>
</feature>
<feature type="compositionally biased region" description="Acidic residues" evidence="4">
    <location>
        <begin position="215"/>
        <end position="248"/>
    </location>
</feature>
<feature type="compositionally biased region" description="Gly residues" evidence="4">
    <location>
        <begin position="290"/>
        <end position="300"/>
    </location>
</feature>
<feature type="compositionally biased region" description="Gly residues" evidence="4">
    <location>
        <begin position="312"/>
        <end position="419"/>
    </location>
</feature>
<feature type="compositionally biased region" description="Gly residues" evidence="4">
    <location>
        <begin position="428"/>
        <end position="445"/>
    </location>
</feature>
<feature type="compositionally biased region" description="Low complexity" evidence="4">
    <location>
        <begin position="471"/>
        <end position="483"/>
    </location>
</feature>
<feature type="compositionally biased region" description="Pro residues" evidence="4">
    <location>
        <begin position="534"/>
        <end position="547"/>
    </location>
</feature>
<feature type="compositionally biased region" description="Pro residues" evidence="4">
    <location>
        <begin position="554"/>
        <end position="565"/>
    </location>
</feature>
<feature type="compositionally biased region" description="Polar residues" evidence="4">
    <location>
        <begin position="578"/>
        <end position="587"/>
    </location>
</feature>
<feature type="binding site" evidence="3">
    <location>
        <position position="20"/>
    </location>
    <ligand>
        <name>a metal cation</name>
        <dbReference type="ChEBI" id="CHEBI:25213"/>
    </ligand>
</feature>
<feature type="binding site" evidence="3">
    <location>
        <position position="23"/>
    </location>
    <ligand>
        <name>a metal cation</name>
        <dbReference type="ChEBI" id="CHEBI:25213"/>
    </ligand>
</feature>
<feature type="modified residue" description="Cysteine methyl ester" evidence="2">
    <location>
        <position position="584"/>
    </location>
</feature>
<feature type="lipid moiety-binding region" description="S-farnesyl cysteine" evidence="2">
    <location>
        <position position="584"/>
    </location>
</feature>
<feature type="splice variant" id="VSP_058571" description="In isoform 2.">
    <location>
        <begin position="291"/>
        <end position="412"/>
    </location>
</feature>
<protein>
    <recommendedName>
        <fullName evidence="5 6">Heavy metal-associated isoprenylated plant protein 33</fullName>
        <shortName evidence="5 6">AtHIP33</shortName>
    </recommendedName>
</protein>
<sequence>MSKEEFMKIQTCVLKVNIHCDGCKQKVKKILQKIEGVFTTKIDAELGKVTVSGNVDPSVLIKKLLKSGKHAEIWGAPKGGSNNNQNQPNLANQFKAMQIDHGGKGGGGGGGGPANNNKGQKIGGGGGGGGGGGGGGGGGPPKMVIPQLTPQQMQQLNPQQLQQLQQLQQMKGFQDLKLPPQLKGGPGPGPGSVPMNKNPQMPNNPNQKAVKFNVPDDDDEEDFSDEFDDEFDEDDDEFDDDLEDDEFDDHPPPPNKMKPMMGGGNMIMPNNMMPNMMMPNAQQMLNAHKNGGGPGPAGGKIEGKGMPFPVQMGGGGGGPGGKKGGPGGGGGNMGNQNQGGGGKNGGKGGGGHPLDGKMGGGGGGPNGNKGGGGVQMNGGPNGGKKGGGGGGGGGGGPMSGGLPPGFRPMGGGGGGGGGPQSMSMPMGGAMGGPMGSLPQMGGGPGPMSNNMQAVQGLPAMGPGGGGGGGPSAEAPPGYFQGQVSGNGGGGQDSMPGNPYLQQQQQQQQQQYLAAVMNQQRSMGNERFQPMMYARPPPAVNYMPPQPQPHQQHPYPYPYPYPPQYPPHNGDQYSDYFNDENTSSCNIM</sequence>
<reference key="1">
    <citation type="journal article" date="2000" name="Nature">
        <title>Sequence and analysis of chromosome 5 of the plant Arabidopsis thaliana.</title>
        <authorList>
            <person name="Tabata S."/>
            <person name="Kaneko T."/>
            <person name="Nakamura Y."/>
            <person name="Kotani H."/>
            <person name="Kato T."/>
            <person name="Asamizu E."/>
            <person name="Miyajima N."/>
            <person name="Sasamoto S."/>
            <person name="Kimura T."/>
            <person name="Hosouchi T."/>
            <person name="Kawashima K."/>
            <person name="Kohara M."/>
            <person name="Matsumoto M."/>
            <person name="Matsuno A."/>
            <person name="Muraki A."/>
            <person name="Nakayama S."/>
            <person name="Nakazaki N."/>
            <person name="Naruo K."/>
            <person name="Okumura S."/>
            <person name="Shinpo S."/>
            <person name="Takeuchi C."/>
            <person name="Wada T."/>
            <person name="Watanabe A."/>
            <person name="Yamada M."/>
            <person name="Yasuda M."/>
            <person name="Sato S."/>
            <person name="de la Bastide M."/>
            <person name="Huang E."/>
            <person name="Spiegel L."/>
            <person name="Gnoj L."/>
            <person name="O'Shaughnessy A."/>
            <person name="Preston R."/>
            <person name="Habermann K."/>
            <person name="Murray J."/>
            <person name="Johnson D."/>
            <person name="Rohlfing T."/>
            <person name="Nelson J."/>
            <person name="Stoneking T."/>
            <person name="Pepin K."/>
            <person name="Spieth J."/>
            <person name="Sekhon M."/>
            <person name="Armstrong J."/>
            <person name="Becker M."/>
            <person name="Belter E."/>
            <person name="Cordum H."/>
            <person name="Cordes M."/>
            <person name="Courtney L."/>
            <person name="Courtney W."/>
            <person name="Dante M."/>
            <person name="Du H."/>
            <person name="Edwards J."/>
            <person name="Fryman J."/>
            <person name="Haakensen B."/>
            <person name="Lamar E."/>
            <person name="Latreille P."/>
            <person name="Leonard S."/>
            <person name="Meyer R."/>
            <person name="Mulvaney E."/>
            <person name="Ozersky P."/>
            <person name="Riley A."/>
            <person name="Strowmatt C."/>
            <person name="Wagner-McPherson C."/>
            <person name="Wollam A."/>
            <person name="Yoakum M."/>
            <person name="Bell M."/>
            <person name="Dedhia N."/>
            <person name="Parnell L."/>
            <person name="Shah R."/>
            <person name="Rodriguez M."/>
            <person name="Hoon See L."/>
            <person name="Vil D."/>
            <person name="Baker J."/>
            <person name="Kirchoff K."/>
            <person name="Toth K."/>
            <person name="King L."/>
            <person name="Bahret A."/>
            <person name="Miller B."/>
            <person name="Marra M.A."/>
            <person name="Martienssen R."/>
            <person name="McCombie W.R."/>
            <person name="Wilson R.K."/>
            <person name="Murphy G."/>
            <person name="Bancroft I."/>
            <person name="Volckaert G."/>
            <person name="Wambutt R."/>
            <person name="Duesterhoeft A."/>
            <person name="Stiekema W."/>
            <person name="Pohl T."/>
            <person name="Entian K.-D."/>
            <person name="Terryn N."/>
            <person name="Hartley N."/>
            <person name="Bent E."/>
            <person name="Johnson S."/>
            <person name="Langham S.-A."/>
            <person name="McCullagh B."/>
            <person name="Robben J."/>
            <person name="Grymonprez B."/>
            <person name="Zimmermann W."/>
            <person name="Ramsperger U."/>
            <person name="Wedler H."/>
            <person name="Balke K."/>
            <person name="Wedler E."/>
            <person name="Peters S."/>
            <person name="van Staveren M."/>
            <person name="Dirkse W."/>
            <person name="Mooijman P."/>
            <person name="Klein Lankhorst R."/>
            <person name="Weitzenegger T."/>
            <person name="Bothe G."/>
            <person name="Rose M."/>
            <person name="Hauf J."/>
            <person name="Berneiser S."/>
            <person name="Hempel S."/>
            <person name="Feldpausch M."/>
            <person name="Lamberth S."/>
            <person name="Villarroel R."/>
            <person name="Gielen J."/>
            <person name="Ardiles W."/>
            <person name="Bents O."/>
            <person name="Lemcke K."/>
            <person name="Kolesov G."/>
            <person name="Mayer K.F.X."/>
            <person name="Rudd S."/>
            <person name="Schoof H."/>
            <person name="Schueller C."/>
            <person name="Zaccaria P."/>
            <person name="Mewes H.-W."/>
            <person name="Bevan M."/>
            <person name="Fransz P.F."/>
        </authorList>
    </citation>
    <scope>NUCLEOTIDE SEQUENCE [LARGE SCALE GENOMIC DNA]</scope>
    <source>
        <strain>cv. Columbia</strain>
    </source>
</reference>
<reference key="2">
    <citation type="journal article" date="2017" name="Plant J.">
        <title>Araport11: a complete reannotation of the Arabidopsis thaliana reference genome.</title>
        <authorList>
            <person name="Cheng C.Y."/>
            <person name="Krishnakumar V."/>
            <person name="Chan A.P."/>
            <person name="Thibaud-Nissen F."/>
            <person name="Schobel S."/>
            <person name="Town C.D."/>
        </authorList>
    </citation>
    <scope>GENOME REANNOTATION</scope>
    <source>
        <strain>cv. Columbia</strain>
    </source>
</reference>
<reference key="3">
    <citation type="journal article" date="2003" name="Science">
        <title>Empirical analysis of transcriptional activity in the Arabidopsis genome.</title>
        <authorList>
            <person name="Yamada K."/>
            <person name="Lim J."/>
            <person name="Dale J.M."/>
            <person name="Chen H."/>
            <person name="Shinn P."/>
            <person name="Palm C.J."/>
            <person name="Southwick A.M."/>
            <person name="Wu H.C."/>
            <person name="Kim C.J."/>
            <person name="Nguyen M."/>
            <person name="Pham P.K."/>
            <person name="Cheuk R.F."/>
            <person name="Karlin-Newmann G."/>
            <person name="Liu S.X."/>
            <person name="Lam B."/>
            <person name="Sakano H."/>
            <person name="Wu T."/>
            <person name="Yu G."/>
            <person name="Miranda M."/>
            <person name="Quach H.L."/>
            <person name="Tripp M."/>
            <person name="Chang C.H."/>
            <person name="Lee J.M."/>
            <person name="Toriumi M.J."/>
            <person name="Chan M.M."/>
            <person name="Tang C.C."/>
            <person name="Onodera C.S."/>
            <person name="Deng J.M."/>
            <person name="Akiyama K."/>
            <person name="Ansari Y."/>
            <person name="Arakawa T."/>
            <person name="Banh J."/>
            <person name="Banno F."/>
            <person name="Bowser L."/>
            <person name="Brooks S.Y."/>
            <person name="Carninci P."/>
            <person name="Chao Q."/>
            <person name="Choy N."/>
            <person name="Enju A."/>
            <person name="Goldsmith A.D."/>
            <person name="Gurjal M."/>
            <person name="Hansen N.F."/>
            <person name="Hayashizaki Y."/>
            <person name="Johnson-Hopson C."/>
            <person name="Hsuan V.W."/>
            <person name="Iida K."/>
            <person name="Karnes M."/>
            <person name="Khan S."/>
            <person name="Koesema E."/>
            <person name="Ishida J."/>
            <person name="Jiang P.X."/>
            <person name="Jones T."/>
            <person name="Kawai J."/>
            <person name="Kamiya A."/>
            <person name="Meyers C."/>
            <person name="Nakajima M."/>
            <person name="Narusaka M."/>
            <person name="Seki M."/>
            <person name="Sakurai T."/>
            <person name="Satou M."/>
            <person name="Tamse R."/>
            <person name="Vaysberg M."/>
            <person name="Wallender E.K."/>
            <person name="Wong C."/>
            <person name="Yamamura Y."/>
            <person name="Yuan S."/>
            <person name="Shinozaki K."/>
            <person name="Davis R.W."/>
            <person name="Theologis A."/>
            <person name="Ecker J.R."/>
        </authorList>
    </citation>
    <scope>NUCLEOTIDE SEQUENCE [LARGE SCALE MRNA] OF 115-587</scope>
    <source>
        <strain>cv. Columbia</strain>
    </source>
</reference>
<reference key="4">
    <citation type="journal article" date="2010" name="Metallomics">
        <title>Metallochaperone-like genes in Arabidopsis thaliana.</title>
        <authorList>
            <person name="Tehseen M."/>
            <person name="Cairns N."/>
            <person name="Sherson S."/>
            <person name="Cobbett C.S."/>
        </authorList>
    </citation>
    <scope>GENE FAMILY</scope>
    <scope>NOMENCLATURE</scope>
</reference>
<reference key="5">
    <citation type="journal article" date="2013" name="FEBS J.">
        <title>Heavy metal-associated isoprenylated plant protein (HIPP): characterization of a family of proteins exclusive to plants.</title>
        <authorList>
            <person name="de Abreu-Neto J.B."/>
            <person name="Turchetto-Zolet A.C."/>
            <person name="de Oliveira L.F."/>
            <person name="Zanettini M.H."/>
            <person name="Margis-Pinheiro M."/>
        </authorList>
    </citation>
    <scope>GENE FAMILY</scope>
    <scope>NOMENCLATURE</scope>
</reference>
<proteinExistence type="evidence at transcript level"/>
<comment type="function">
    <text evidence="1">Heavy-metal-binding protein.</text>
</comment>
<comment type="alternative products">
    <event type="alternative splicing"/>
    <isoform>
        <id>F4JZL7-1</id>
        <name>1</name>
        <sequence type="displayed"/>
    </isoform>
    <isoform>
        <id>F4JZL7-2</id>
        <name>2</name>
        <sequence type="described" ref="VSP_058571"/>
    </isoform>
</comment>
<comment type="similarity">
    <text evidence="7">Belongs to the HIPP family.</text>
</comment>
<keyword id="KW-0025">Alternative splicing</keyword>
<keyword id="KW-0449">Lipoprotein</keyword>
<keyword id="KW-0479">Metal-binding</keyword>
<keyword id="KW-0488">Methylation</keyword>
<keyword id="KW-0636">Prenylation</keyword>
<keyword id="KW-1185">Reference proteome</keyword>
<gene>
    <name evidence="5 6" type="primary">HIPP33</name>
    <name evidence="8" type="ordered locus">At5g19090</name>
    <name evidence="9" type="ORF">T16G12.130</name>
</gene>
<dbReference type="EMBL" id="AC068809">
    <property type="status" value="NOT_ANNOTATED_CDS"/>
    <property type="molecule type" value="Genomic_DNA"/>
</dbReference>
<dbReference type="EMBL" id="CP002688">
    <property type="protein sequence ID" value="AED92650.1"/>
    <property type="molecule type" value="Genomic_DNA"/>
</dbReference>
<dbReference type="EMBL" id="CP002688">
    <property type="protein sequence ID" value="AED92651.1"/>
    <property type="molecule type" value="Genomic_DNA"/>
</dbReference>
<dbReference type="EMBL" id="CP002688">
    <property type="protein sequence ID" value="AED92652.1"/>
    <property type="molecule type" value="Genomic_DNA"/>
</dbReference>
<dbReference type="EMBL" id="CP002688">
    <property type="protein sequence ID" value="ANM69822.1"/>
    <property type="molecule type" value="Genomic_DNA"/>
</dbReference>
<dbReference type="EMBL" id="CP002688">
    <property type="protein sequence ID" value="ANM69823.1"/>
    <property type="molecule type" value="Genomic_DNA"/>
</dbReference>
<dbReference type="EMBL" id="BT002910">
    <property type="protein sequence ID" value="AAO22726.1"/>
    <property type="molecule type" value="mRNA"/>
</dbReference>
<dbReference type="RefSeq" id="NP_001154719.1">
    <molecule id="F4JZL7-2"/>
    <property type="nucleotide sequence ID" value="NM_001161247.1"/>
</dbReference>
<dbReference type="RefSeq" id="NP_001331474.1">
    <molecule id="F4JZL7-1"/>
    <property type="nucleotide sequence ID" value="NM_001343588.1"/>
</dbReference>
<dbReference type="RefSeq" id="NP_001331475.1">
    <molecule id="F4JZL7-1"/>
    <property type="nucleotide sequence ID" value="NM_001343587.1"/>
</dbReference>
<dbReference type="RefSeq" id="NP_197410.1">
    <molecule id="F4JZL7-1"/>
    <property type="nucleotide sequence ID" value="NM_121914.4"/>
</dbReference>
<dbReference type="RefSeq" id="NP_850851.1">
    <molecule id="F4JZL7-2"/>
    <property type="nucleotide sequence ID" value="NM_180520.2"/>
</dbReference>
<dbReference type="SMR" id="F4JZL7"/>
<dbReference type="FunCoup" id="F4JZL7">
    <property type="interactions" value="959"/>
</dbReference>
<dbReference type="STRING" id="3702.F4JZL7"/>
<dbReference type="PaxDb" id="3702-AT5G19090.1"/>
<dbReference type="ProteomicsDB" id="230193">
    <molecule id="F4JZL7-1"/>
</dbReference>
<dbReference type="EnsemblPlants" id="AT5G19090.1">
    <molecule id="F4JZL7-1"/>
    <property type="protein sequence ID" value="AT5G19090.1"/>
    <property type="gene ID" value="AT5G19090"/>
</dbReference>
<dbReference type="EnsemblPlants" id="AT5G19090.2">
    <molecule id="F4JZL7-2"/>
    <property type="protein sequence ID" value="AT5G19090.2"/>
    <property type="gene ID" value="AT5G19090"/>
</dbReference>
<dbReference type="EnsemblPlants" id="AT5G19090.3">
    <molecule id="F4JZL7-2"/>
    <property type="protein sequence ID" value="AT5G19090.3"/>
    <property type="gene ID" value="AT5G19090"/>
</dbReference>
<dbReference type="EnsemblPlants" id="AT5G19090.4">
    <molecule id="F4JZL7-1"/>
    <property type="protein sequence ID" value="AT5G19090.4"/>
    <property type="gene ID" value="AT5G19090"/>
</dbReference>
<dbReference type="EnsemblPlants" id="AT5G19090.5">
    <molecule id="F4JZL7-1"/>
    <property type="protein sequence ID" value="AT5G19090.5"/>
    <property type="gene ID" value="AT5G19090"/>
</dbReference>
<dbReference type="GeneID" id="832028"/>
<dbReference type="Gramene" id="AT5G19090.1">
    <molecule id="F4JZL7-1"/>
    <property type="protein sequence ID" value="AT5G19090.1"/>
    <property type="gene ID" value="AT5G19090"/>
</dbReference>
<dbReference type="Gramene" id="AT5G19090.2">
    <molecule id="F4JZL7-2"/>
    <property type="protein sequence ID" value="AT5G19090.2"/>
    <property type="gene ID" value="AT5G19090"/>
</dbReference>
<dbReference type="Gramene" id="AT5G19090.3">
    <molecule id="F4JZL7-2"/>
    <property type="protein sequence ID" value="AT5G19090.3"/>
    <property type="gene ID" value="AT5G19090"/>
</dbReference>
<dbReference type="Gramene" id="AT5G19090.4">
    <molecule id="F4JZL7-1"/>
    <property type="protein sequence ID" value="AT5G19090.4"/>
    <property type="gene ID" value="AT5G19090"/>
</dbReference>
<dbReference type="Gramene" id="AT5G19090.5">
    <molecule id="F4JZL7-1"/>
    <property type="protein sequence ID" value="AT5G19090.5"/>
    <property type="gene ID" value="AT5G19090"/>
</dbReference>
<dbReference type="KEGG" id="ath:AT5G19090"/>
<dbReference type="Araport" id="AT5G19090"/>
<dbReference type="TAIR" id="AT5G19090"/>
<dbReference type="eggNOG" id="KOG1603">
    <property type="taxonomic scope" value="Eukaryota"/>
</dbReference>
<dbReference type="InParanoid" id="F4JZL7"/>
<dbReference type="OMA" id="GPPMKMG"/>
<dbReference type="OrthoDB" id="1114218at2759"/>
<dbReference type="CD-CODE" id="4299E36E">
    <property type="entry name" value="Nucleolus"/>
</dbReference>
<dbReference type="PRO" id="PR:F4JZL7"/>
<dbReference type="Proteomes" id="UP000006548">
    <property type="component" value="Chromosome 5"/>
</dbReference>
<dbReference type="ExpressionAtlas" id="F4JZL7">
    <property type="expression patterns" value="baseline and differential"/>
</dbReference>
<dbReference type="GO" id="GO:0009506">
    <property type="term" value="C:plasmodesma"/>
    <property type="evidence" value="ECO:0007005"/>
    <property type="project" value="TAIR"/>
</dbReference>
<dbReference type="GO" id="GO:0046872">
    <property type="term" value="F:metal ion binding"/>
    <property type="evidence" value="ECO:0007669"/>
    <property type="project" value="UniProtKB-KW"/>
</dbReference>
<dbReference type="CDD" id="cd00371">
    <property type="entry name" value="HMA"/>
    <property type="match status" value="1"/>
</dbReference>
<dbReference type="FunFam" id="3.30.70.100:FF:000008">
    <property type="entry name" value="Copper transport protein ATOX1"/>
    <property type="match status" value="1"/>
</dbReference>
<dbReference type="Gene3D" id="3.30.70.100">
    <property type="match status" value="1"/>
</dbReference>
<dbReference type="InterPro" id="IPR006121">
    <property type="entry name" value="HMA_dom"/>
</dbReference>
<dbReference type="InterPro" id="IPR036163">
    <property type="entry name" value="HMA_dom_sf"/>
</dbReference>
<dbReference type="PANTHER" id="PTHR45868:SF74">
    <property type="entry name" value="HEAVY METAL-ASSOCIATED ISOPRENYLATED PLANT PROTEIN 33"/>
    <property type="match status" value="1"/>
</dbReference>
<dbReference type="PANTHER" id="PTHR45868">
    <property type="entry name" value="HEAVY METAL-ASSOCIATED ISOPRENYLATED PLANT PROTEIN 33-RELATED"/>
    <property type="match status" value="1"/>
</dbReference>
<dbReference type="Pfam" id="PF00403">
    <property type="entry name" value="HMA"/>
    <property type="match status" value="1"/>
</dbReference>
<dbReference type="SUPFAM" id="SSF55008">
    <property type="entry name" value="HMA, heavy metal-associated domain"/>
    <property type="match status" value="1"/>
</dbReference>
<dbReference type="PROSITE" id="PS50846">
    <property type="entry name" value="HMA_2"/>
    <property type="match status" value="1"/>
</dbReference>